<keyword id="KW-0143">Chaperone</keyword>
<keyword id="KW-0963">Cytoplasm</keyword>
<keyword id="KW-0235">DNA replication</keyword>
<keyword id="KW-0479">Metal-binding</keyword>
<keyword id="KW-1185">Reference proteome</keyword>
<keyword id="KW-0677">Repeat</keyword>
<keyword id="KW-0346">Stress response</keyword>
<keyword id="KW-0862">Zinc</keyword>
<keyword id="KW-0863">Zinc-finger</keyword>
<name>DNAJ_HAEIN</name>
<protein>
    <recommendedName>
        <fullName evidence="1">Chaperone protein DnaJ</fullName>
    </recommendedName>
</protein>
<accession>P43735</accession>
<proteinExistence type="inferred from homology"/>
<gene>
    <name evidence="1" type="primary">dnaJ</name>
    <name type="ordered locus">HI_1238</name>
</gene>
<dbReference type="EMBL" id="L42023">
    <property type="protein sequence ID" value="AAC22890.1"/>
    <property type="status" value="ALT_INIT"/>
    <property type="molecule type" value="Genomic_DNA"/>
</dbReference>
<dbReference type="PIR" id="C64112">
    <property type="entry name" value="C64112"/>
</dbReference>
<dbReference type="RefSeq" id="NP_439394.1">
    <property type="nucleotide sequence ID" value="NC_000907.1"/>
</dbReference>
<dbReference type="SMR" id="P43735"/>
<dbReference type="STRING" id="71421.HI_1238"/>
<dbReference type="EnsemblBacteria" id="AAC22890">
    <property type="protein sequence ID" value="AAC22890"/>
    <property type="gene ID" value="HI_1238"/>
</dbReference>
<dbReference type="KEGG" id="hin:HI_1238"/>
<dbReference type="PATRIC" id="fig|71421.8.peg.1290"/>
<dbReference type="eggNOG" id="COG0484">
    <property type="taxonomic scope" value="Bacteria"/>
</dbReference>
<dbReference type="HOGENOM" id="CLU_017633_0_7_6"/>
<dbReference type="OrthoDB" id="9779889at2"/>
<dbReference type="PhylomeDB" id="P43735"/>
<dbReference type="Proteomes" id="UP000000579">
    <property type="component" value="Chromosome"/>
</dbReference>
<dbReference type="GO" id="GO:0005737">
    <property type="term" value="C:cytoplasm"/>
    <property type="evidence" value="ECO:0000318"/>
    <property type="project" value="GO_Central"/>
</dbReference>
<dbReference type="GO" id="GO:0005524">
    <property type="term" value="F:ATP binding"/>
    <property type="evidence" value="ECO:0007669"/>
    <property type="project" value="InterPro"/>
</dbReference>
<dbReference type="GO" id="GO:0031072">
    <property type="term" value="F:heat shock protein binding"/>
    <property type="evidence" value="ECO:0007669"/>
    <property type="project" value="InterPro"/>
</dbReference>
<dbReference type="GO" id="GO:0051082">
    <property type="term" value="F:unfolded protein binding"/>
    <property type="evidence" value="ECO:0000318"/>
    <property type="project" value="GO_Central"/>
</dbReference>
<dbReference type="GO" id="GO:0008270">
    <property type="term" value="F:zinc ion binding"/>
    <property type="evidence" value="ECO:0007669"/>
    <property type="project" value="UniProtKB-UniRule"/>
</dbReference>
<dbReference type="GO" id="GO:0051085">
    <property type="term" value="P:chaperone cofactor-dependent protein refolding"/>
    <property type="evidence" value="ECO:0000318"/>
    <property type="project" value="GO_Central"/>
</dbReference>
<dbReference type="GO" id="GO:0006260">
    <property type="term" value="P:DNA replication"/>
    <property type="evidence" value="ECO:0007669"/>
    <property type="project" value="UniProtKB-KW"/>
</dbReference>
<dbReference type="GO" id="GO:0042026">
    <property type="term" value="P:protein refolding"/>
    <property type="evidence" value="ECO:0000318"/>
    <property type="project" value="GO_Central"/>
</dbReference>
<dbReference type="GO" id="GO:0009408">
    <property type="term" value="P:response to heat"/>
    <property type="evidence" value="ECO:0007669"/>
    <property type="project" value="InterPro"/>
</dbReference>
<dbReference type="CDD" id="cd06257">
    <property type="entry name" value="DnaJ"/>
    <property type="match status" value="1"/>
</dbReference>
<dbReference type="CDD" id="cd10747">
    <property type="entry name" value="DnaJ_C"/>
    <property type="match status" value="1"/>
</dbReference>
<dbReference type="CDD" id="cd10719">
    <property type="entry name" value="DnaJ_zf"/>
    <property type="match status" value="1"/>
</dbReference>
<dbReference type="FunFam" id="1.10.287.110:FF:000034">
    <property type="entry name" value="Chaperone protein DnaJ"/>
    <property type="match status" value="1"/>
</dbReference>
<dbReference type="FunFam" id="2.10.230.10:FF:000002">
    <property type="entry name" value="Molecular chaperone DnaJ"/>
    <property type="match status" value="1"/>
</dbReference>
<dbReference type="FunFam" id="2.60.260.20:FF:000004">
    <property type="entry name" value="Molecular chaperone DnaJ"/>
    <property type="match status" value="1"/>
</dbReference>
<dbReference type="Gene3D" id="1.10.287.110">
    <property type="entry name" value="DnaJ domain"/>
    <property type="match status" value="1"/>
</dbReference>
<dbReference type="Gene3D" id="2.10.230.10">
    <property type="entry name" value="Heat shock protein DnaJ, cysteine-rich domain"/>
    <property type="match status" value="1"/>
</dbReference>
<dbReference type="Gene3D" id="2.60.260.20">
    <property type="entry name" value="Urease metallochaperone UreE, N-terminal domain"/>
    <property type="match status" value="2"/>
</dbReference>
<dbReference type="HAMAP" id="MF_01152">
    <property type="entry name" value="DnaJ"/>
    <property type="match status" value="1"/>
</dbReference>
<dbReference type="InterPro" id="IPR012724">
    <property type="entry name" value="DnaJ"/>
</dbReference>
<dbReference type="InterPro" id="IPR002939">
    <property type="entry name" value="DnaJ_C"/>
</dbReference>
<dbReference type="InterPro" id="IPR001623">
    <property type="entry name" value="DnaJ_domain"/>
</dbReference>
<dbReference type="InterPro" id="IPR018253">
    <property type="entry name" value="DnaJ_domain_CS"/>
</dbReference>
<dbReference type="InterPro" id="IPR008971">
    <property type="entry name" value="HSP40/DnaJ_pept-bd"/>
</dbReference>
<dbReference type="InterPro" id="IPR001305">
    <property type="entry name" value="HSP_DnaJ_Cys-rich_dom"/>
</dbReference>
<dbReference type="InterPro" id="IPR036410">
    <property type="entry name" value="HSP_DnaJ_Cys-rich_dom_sf"/>
</dbReference>
<dbReference type="InterPro" id="IPR036869">
    <property type="entry name" value="J_dom_sf"/>
</dbReference>
<dbReference type="NCBIfam" id="TIGR02349">
    <property type="entry name" value="DnaJ_bact"/>
    <property type="match status" value="1"/>
</dbReference>
<dbReference type="NCBIfam" id="NF008035">
    <property type="entry name" value="PRK10767.1"/>
    <property type="match status" value="1"/>
</dbReference>
<dbReference type="PANTHER" id="PTHR43096:SF48">
    <property type="entry name" value="CHAPERONE PROTEIN DNAJ"/>
    <property type="match status" value="1"/>
</dbReference>
<dbReference type="PANTHER" id="PTHR43096">
    <property type="entry name" value="DNAJ HOMOLOG 1, MITOCHONDRIAL-RELATED"/>
    <property type="match status" value="1"/>
</dbReference>
<dbReference type="Pfam" id="PF00226">
    <property type="entry name" value="DnaJ"/>
    <property type="match status" value="1"/>
</dbReference>
<dbReference type="Pfam" id="PF01556">
    <property type="entry name" value="DnaJ_C"/>
    <property type="match status" value="1"/>
</dbReference>
<dbReference type="Pfam" id="PF00684">
    <property type="entry name" value="DnaJ_CXXCXGXG"/>
    <property type="match status" value="1"/>
</dbReference>
<dbReference type="PRINTS" id="PR00625">
    <property type="entry name" value="JDOMAIN"/>
</dbReference>
<dbReference type="SMART" id="SM00271">
    <property type="entry name" value="DnaJ"/>
    <property type="match status" value="1"/>
</dbReference>
<dbReference type="SUPFAM" id="SSF46565">
    <property type="entry name" value="Chaperone J-domain"/>
    <property type="match status" value="1"/>
</dbReference>
<dbReference type="SUPFAM" id="SSF57938">
    <property type="entry name" value="DnaJ/Hsp40 cysteine-rich domain"/>
    <property type="match status" value="1"/>
</dbReference>
<dbReference type="SUPFAM" id="SSF49493">
    <property type="entry name" value="HSP40/DnaJ peptide-binding domain"/>
    <property type="match status" value="2"/>
</dbReference>
<dbReference type="PROSITE" id="PS00636">
    <property type="entry name" value="DNAJ_1"/>
    <property type="match status" value="1"/>
</dbReference>
<dbReference type="PROSITE" id="PS50076">
    <property type="entry name" value="DNAJ_2"/>
    <property type="match status" value="1"/>
</dbReference>
<dbReference type="PROSITE" id="PS51188">
    <property type="entry name" value="ZF_CR"/>
    <property type="match status" value="1"/>
</dbReference>
<feature type="chain" id="PRO_0000070794" description="Chaperone protein DnaJ">
    <location>
        <begin position="1"/>
        <end position="382"/>
    </location>
</feature>
<feature type="domain" description="J" evidence="1">
    <location>
        <begin position="5"/>
        <end position="70"/>
    </location>
</feature>
<feature type="repeat" description="CXXCXGXG motif">
    <location>
        <begin position="147"/>
        <end position="154"/>
    </location>
</feature>
<feature type="repeat" description="CXXCXGXG motif">
    <location>
        <begin position="164"/>
        <end position="171"/>
    </location>
</feature>
<feature type="repeat" description="CXXCXGXG motif">
    <location>
        <begin position="186"/>
        <end position="193"/>
    </location>
</feature>
<feature type="repeat" description="CXXCXGXG motif">
    <location>
        <begin position="200"/>
        <end position="207"/>
    </location>
</feature>
<feature type="zinc finger region" description="CR-type" evidence="1">
    <location>
        <begin position="134"/>
        <end position="212"/>
    </location>
</feature>
<feature type="binding site" evidence="1">
    <location>
        <position position="147"/>
    </location>
    <ligand>
        <name>Zn(2+)</name>
        <dbReference type="ChEBI" id="CHEBI:29105"/>
        <label>1</label>
    </ligand>
</feature>
<feature type="binding site" evidence="1">
    <location>
        <position position="150"/>
    </location>
    <ligand>
        <name>Zn(2+)</name>
        <dbReference type="ChEBI" id="CHEBI:29105"/>
        <label>1</label>
    </ligand>
</feature>
<feature type="binding site" evidence="1">
    <location>
        <position position="164"/>
    </location>
    <ligand>
        <name>Zn(2+)</name>
        <dbReference type="ChEBI" id="CHEBI:29105"/>
        <label>2</label>
    </ligand>
</feature>
<feature type="binding site" evidence="1">
    <location>
        <position position="167"/>
    </location>
    <ligand>
        <name>Zn(2+)</name>
        <dbReference type="ChEBI" id="CHEBI:29105"/>
        <label>2</label>
    </ligand>
</feature>
<feature type="binding site" evidence="1">
    <location>
        <position position="186"/>
    </location>
    <ligand>
        <name>Zn(2+)</name>
        <dbReference type="ChEBI" id="CHEBI:29105"/>
        <label>2</label>
    </ligand>
</feature>
<feature type="binding site" evidence="1">
    <location>
        <position position="189"/>
    </location>
    <ligand>
        <name>Zn(2+)</name>
        <dbReference type="ChEBI" id="CHEBI:29105"/>
        <label>2</label>
    </ligand>
</feature>
<feature type="binding site" evidence="1">
    <location>
        <position position="200"/>
    </location>
    <ligand>
        <name>Zn(2+)</name>
        <dbReference type="ChEBI" id="CHEBI:29105"/>
        <label>1</label>
    </ligand>
</feature>
<feature type="binding site" evidence="1">
    <location>
        <position position="203"/>
    </location>
    <ligand>
        <name>Zn(2+)</name>
        <dbReference type="ChEBI" id="CHEBI:29105"/>
        <label>1</label>
    </ligand>
</feature>
<sequence>MAKKDYYEVLGLQKGASEDEIKRAYKRLASKHHPDKNQGSKEAEEKFKEINEAYEVLGDDQKRAAYDQYGHAAFEQGGGAGGFGGGFGGADFGDMFGDIFGDIFGGGGRGRQRVVRGEDLRYDLEISLEEAVKGTTKDIQINTLAHCDSCGGSGAEKGSKVETCPHCHGSGRIRRQQGFFVSESICPTCHGSGKKIEKPCRNCHGEGRVHKKENLSVKIPAGVDTGNQLRLAGKGAAGENGAPAGDLYVVIHVREHNIFERDGSNLYCEVPISFATAALGGEIEVPTLDGRVKLKIPAETQTGKLFRMRGKGVASTRSGYAGDLICRIVVETPVNLTSEQKELLHKLEESLQGKDLSKHAPKSSGFLDGVKKFFDNLGKSDK</sequence>
<evidence type="ECO:0000255" key="1">
    <source>
        <dbReference type="HAMAP-Rule" id="MF_01152"/>
    </source>
</evidence>
<evidence type="ECO:0000305" key="2"/>
<comment type="function">
    <text evidence="1">Participates actively in the response to hyperosmotic and heat shock by preventing the aggregation of stress-denatured proteins and by disaggregating proteins, also in an autonomous, DnaK-independent fashion. Unfolded proteins bind initially to DnaJ; upon interaction with the DnaJ-bound protein, DnaK hydrolyzes its bound ATP, resulting in the formation of a stable complex. GrpE releases ADP from DnaK; ATP binding to DnaK triggers the release of the substrate protein, thus completing the reaction cycle. Several rounds of ATP-dependent interactions between DnaJ, DnaK and GrpE are required for fully efficient folding. Also involved, together with DnaK and GrpE, in the DNA replication of plasmids through activation of initiation proteins.</text>
</comment>
<comment type="cofactor">
    <cofactor evidence="1">
        <name>Zn(2+)</name>
        <dbReference type="ChEBI" id="CHEBI:29105"/>
    </cofactor>
    <text evidence="1">Binds 2 Zn(2+) ions per monomer.</text>
</comment>
<comment type="subunit">
    <text evidence="1">Homodimer.</text>
</comment>
<comment type="subcellular location">
    <subcellularLocation>
        <location evidence="1">Cytoplasm</location>
    </subcellularLocation>
</comment>
<comment type="domain">
    <text evidence="1">The J domain is necessary and sufficient to stimulate DnaK ATPase activity. Zinc center 1 plays an important role in the autonomous, DnaK-independent chaperone activity of DnaJ. Zinc center 2 is essential for interaction with DnaK and for DnaJ activity.</text>
</comment>
<comment type="similarity">
    <text evidence="1">Belongs to the DnaJ family.</text>
</comment>
<comment type="sequence caution" evidence="2">
    <conflict type="erroneous initiation">
        <sequence resource="EMBL-CDS" id="AAC22890"/>
    </conflict>
</comment>
<organism>
    <name type="scientific">Haemophilus influenzae (strain ATCC 51907 / DSM 11121 / KW20 / Rd)</name>
    <dbReference type="NCBI Taxonomy" id="71421"/>
    <lineage>
        <taxon>Bacteria</taxon>
        <taxon>Pseudomonadati</taxon>
        <taxon>Pseudomonadota</taxon>
        <taxon>Gammaproteobacteria</taxon>
        <taxon>Pasteurellales</taxon>
        <taxon>Pasteurellaceae</taxon>
        <taxon>Haemophilus</taxon>
    </lineage>
</organism>
<reference key="1">
    <citation type="journal article" date="1995" name="Science">
        <title>Whole-genome random sequencing and assembly of Haemophilus influenzae Rd.</title>
        <authorList>
            <person name="Fleischmann R.D."/>
            <person name="Adams M.D."/>
            <person name="White O."/>
            <person name="Clayton R.A."/>
            <person name="Kirkness E.F."/>
            <person name="Kerlavage A.R."/>
            <person name="Bult C.J."/>
            <person name="Tomb J.-F."/>
            <person name="Dougherty B.A."/>
            <person name="Merrick J.M."/>
            <person name="McKenney K."/>
            <person name="Sutton G.G."/>
            <person name="FitzHugh W."/>
            <person name="Fields C.A."/>
            <person name="Gocayne J.D."/>
            <person name="Scott J.D."/>
            <person name="Shirley R."/>
            <person name="Liu L.-I."/>
            <person name="Glodek A."/>
            <person name="Kelley J.M."/>
            <person name="Weidman J.F."/>
            <person name="Phillips C.A."/>
            <person name="Spriggs T."/>
            <person name="Hedblom E."/>
            <person name="Cotton M.D."/>
            <person name="Utterback T.R."/>
            <person name="Hanna M.C."/>
            <person name="Nguyen D.T."/>
            <person name="Saudek D.M."/>
            <person name="Brandon R.C."/>
            <person name="Fine L.D."/>
            <person name="Fritchman J.L."/>
            <person name="Fuhrmann J.L."/>
            <person name="Geoghagen N.S.M."/>
            <person name="Gnehm C.L."/>
            <person name="McDonald L.A."/>
            <person name="Small K.V."/>
            <person name="Fraser C.M."/>
            <person name="Smith H.O."/>
            <person name="Venter J.C."/>
        </authorList>
    </citation>
    <scope>NUCLEOTIDE SEQUENCE [LARGE SCALE GENOMIC DNA]</scope>
    <source>
        <strain>ATCC 51907 / DSM 11121 / KW20 / Rd</strain>
    </source>
</reference>